<accession>P0DSX6</accession>
<accession>P33057</accession>
<accession>Q9QNI8</accession>
<gene>
    <name type="ORF">D1R</name>
    <name type="ORF">F1R</name>
</gene>
<comment type="function">
    <text evidence="1">Catalytic subunit of the mRNA capping enzyme which catalyzes three enzymatic reactions: the 5' triphosphate end of the pre-mRNA is hydrolyzed to a diphosphate by RNA 5' triphosphatase; the diphosphate RNA end is capped with GMP by RNA guanylyltransferase and the GpppN cap is methylated by RNA (guanine-N7) methyltransferase. Heterodimeric mRNA capping enzyme catalyzes the linkage of a N7-methyl-guanosine moiety to the first transcribed nucleotide (cap 0 structure), whereas the polymerase associated VP39 is responsible for a second methylation at the 2'-O position of the ribose (cap 1 structure) (By similarity).</text>
</comment>
<comment type="function">
    <text evidence="1">The heterodimeric enzyme is also involved in early viral gene transcription termination and intermediate viral gene transcription initiation. Early gene transcription termination requires the termination factor VTF, the DNA-dependent ATPase NPH-I and the Rap94 subunit of the viral RNA polymerase, as well as the presence of a specific termination motif. Binds, together with RAP94, to the termination motif 5'-UUUUUNU-3' in the nascent early mRNA (By similarity).</text>
</comment>
<comment type="catalytic activity">
    <reaction evidence="2">
        <text>a 5'-end triphospho-ribonucleoside in mRNA + H2O = a 5'-end diphospho-ribonucleoside in mRNA + phosphate + H(+)</text>
        <dbReference type="Rhea" id="RHEA:67004"/>
        <dbReference type="Rhea" id="RHEA-COMP:17164"/>
        <dbReference type="Rhea" id="RHEA-COMP:17165"/>
        <dbReference type="ChEBI" id="CHEBI:15377"/>
        <dbReference type="ChEBI" id="CHEBI:15378"/>
        <dbReference type="ChEBI" id="CHEBI:43474"/>
        <dbReference type="ChEBI" id="CHEBI:167616"/>
        <dbReference type="ChEBI" id="CHEBI:167618"/>
        <dbReference type="EC" id="3.6.1.74"/>
    </reaction>
    <physiologicalReaction direction="left-to-right" evidence="2">
        <dbReference type="Rhea" id="RHEA:67005"/>
    </physiologicalReaction>
</comment>
<comment type="catalytic activity">
    <reaction>
        <text>a 5'-end diphospho-ribonucleoside in mRNA + GTP + H(+) = a 5'-end (5'-triphosphoguanosine)-ribonucleoside in mRNA + diphosphate</text>
        <dbReference type="Rhea" id="RHEA:67012"/>
        <dbReference type="Rhea" id="RHEA-COMP:17165"/>
        <dbReference type="Rhea" id="RHEA-COMP:17166"/>
        <dbReference type="ChEBI" id="CHEBI:15378"/>
        <dbReference type="ChEBI" id="CHEBI:33019"/>
        <dbReference type="ChEBI" id="CHEBI:37565"/>
        <dbReference type="ChEBI" id="CHEBI:167616"/>
        <dbReference type="ChEBI" id="CHEBI:167617"/>
        <dbReference type="EC" id="2.7.7.50"/>
    </reaction>
</comment>
<comment type="catalytic activity">
    <reaction evidence="3">
        <text>a 5'-end (5'-triphosphoguanosine)-ribonucleoside in mRNA + S-adenosyl-L-methionine = a 5'-end (N(7)-methyl 5'-triphosphoguanosine)-ribonucleoside in mRNA + S-adenosyl-L-homocysteine</text>
        <dbReference type="Rhea" id="RHEA:67008"/>
        <dbReference type="Rhea" id="RHEA-COMP:17166"/>
        <dbReference type="Rhea" id="RHEA-COMP:17167"/>
        <dbReference type="ChEBI" id="CHEBI:57856"/>
        <dbReference type="ChEBI" id="CHEBI:59789"/>
        <dbReference type="ChEBI" id="CHEBI:156461"/>
        <dbReference type="ChEBI" id="CHEBI:167617"/>
        <dbReference type="EC" id="2.1.1.56"/>
    </reaction>
</comment>
<comment type="cofactor">
    <cofactor evidence="2">
        <name>Mg(2+)</name>
        <dbReference type="ChEBI" id="CHEBI:18420"/>
    </cofactor>
</comment>
<comment type="subunit">
    <text evidence="1">Heterodimer of a catalytic and a regulatory subunit. Intrinsic methyltransferase activity of the catalytic subunit is weak and needs to be stimulated 30- to 50-fold by the regulatory subunit, which is itself catalytically inert (By similarity).</text>
</comment>
<comment type="subcellular location">
    <subcellularLocation>
        <location evidence="4">Virion</location>
    </subcellularLocation>
    <text>All the enzymes and other proteins required to synthesize early mRNAs are packaged within the virion core along with the DNA genome.</text>
</comment>
<comment type="domain">
    <text evidence="1">The N-terminus contains the triphosphatase and guanylyltransferase domains, whereas the C-terminus contains the methyltransferase domain. The N-terminus is involved in binding to the termination motif 5'-UUUUUNU-3' in the nascent mRNA (By similarity).</text>
</comment>
<comment type="similarity">
    <text evidence="4">In the N-terminal section; belongs to the dsDNA virus mRNA guanylyltransferase family.</text>
</comment>
<comment type="similarity">
    <text evidence="3">In the C-terminal section; belongs to the class I-like SAM-binding methyltransferase superfamily. mRNA cap 0 methyltransferase family.</text>
</comment>
<organismHost>
    <name type="scientific">Homo sapiens</name>
    <name type="common">Human</name>
    <dbReference type="NCBI Taxonomy" id="9606"/>
</organismHost>
<keyword id="KW-0378">Hydrolase</keyword>
<keyword id="KW-0460">Magnesium</keyword>
<keyword id="KW-0479">Metal-binding</keyword>
<keyword id="KW-0489">Methyltransferase</keyword>
<keyword id="KW-0506">mRNA capping</keyword>
<keyword id="KW-0507">mRNA processing</keyword>
<keyword id="KW-0511">Multifunctional enzyme</keyword>
<keyword id="KW-0548">Nucleotidyltransferase</keyword>
<keyword id="KW-0694">RNA-binding</keyword>
<keyword id="KW-0949">S-adenosyl-L-methionine</keyword>
<keyword id="KW-0808">Transferase</keyword>
<keyword id="KW-0946">Virion</keyword>
<evidence type="ECO:0000250" key="1"/>
<evidence type="ECO:0000250" key="2">
    <source>
        <dbReference type="UniProtKB" id="P04298"/>
    </source>
</evidence>
<evidence type="ECO:0000255" key="3">
    <source>
        <dbReference type="PROSITE-ProRule" id="PRU00895"/>
    </source>
</evidence>
<evidence type="ECO:0000305" key="4"/>
<protein>
    <recommendedName>
        <fullName>mRNA-capping enzyme catalytic subunit</fullName>
    </recommendedName>
    <alternativeName>
        <fullName>Virus termination factor large subunit</fullName>
        <shortName>VTF large subunit</shortName>
    </alternativeName>
    <alternativeName>
        <fullName>mRNA-capping enzyme 97 kDa subunit</fullName>
    </alternativeName>
    <alternativeName>
        <fullName>mRNA-capping enzyme D1 subunit</fullName>
    </alternativeName>
    <alternativeName>
        <fullName>mRNA-capping enzyme large subunit</fullName>
    </alternativeName>
    <domain>
        <recommendedName>
            <fullName>Polynucleotide 5'-triphosphatase</fullName>
            <ecNumber>3.6.1.74</ecNumber>
        </recommendedName>
        <alternativeName>
            <fullName>mRNA 5'-triphosphatase</fullName>
            <shortName>TPase</shortName>
        </alternativeName>
    </domain>
    <domain>
        <recommendedName>
            <fullName>mRNA guanylyltransferase</fullName>
            <ecNumber>2.7.7.50</ecNumber>
        </recommendedName>
        <alternativeName>
            <fullName>GTP--RNA guanylyltransferase</fullName>
            <shortName>GTase</shortName>
        </alternativeName>
    </domain>
    <domain>
        <recommendedName>
            <fullName>mRNA (guanine-N(7))-methyltransferase</fullName>
            <ecNumber>2.1.1.56</ecNumber>
        </recommendedName>
        <alternativeName>
            <fullName>mRNA cap methyltransferase</fullName>
        </alternativeName>
    </domain>
</protein>
<sequence length="844" mass="96715">MDANVVSSSTIATYIDALAKNASELEQGSTAYEINNELELVFIKPPLITLTNVVNISTIQESFIRFTVTNKEGVKIRTKIPLSKVHGLDVKNVQLVDAIDNIVWEKKSLVTENRLHKECLLRLSTEERHIFLDYKKYGSSIRLELVNLIQAKTKNFTIDFKLKYFLGSGAQSKSSLLHAINHPKSRPNTSLEIEFTPRDNETVPYDELIKELTTFSRHIFMASPENVILSPPINAPIKTFMLPKQDIVGMDLENLYAVTKTDGIPITIRVTSKGLYCYFTHLGYIIRYPVKRIIDSEVVVFGEAVKDKNWTVYLIKLIEPVNAISDRLEESKYVESKLVDICDRIVFKSKKYEGPFTTTSEVVDMLSTYLPKQPEGVILFYSKGPKSNIDFKIKKENTIDQTVNVVFRYMSSEPIIFGESSIFIEYKKFTNDKGFPKEYGSGKIVLYNGVNYLNNIYCLEYINTHNEVGIKSVVVPIKFIAEFLVNGEILKPRIDKTMKYINSEDYYGNQHNVIVEHLRDQSIKIGDVFNEDKLSDVGHQYANNDKFRLNPEVSYFTNKRTRGPLGILSNYVKTLLISMYCSKTFLDDSNKRKVLAIDFGNGADLEKYFYGEIALLVATDPDADAIARGNERYNKLNSGIKTKYYKFDYIQETIRSNTFVSSVREVFYFGKFNIIDWQFAIHYSFHPRHYATIMNNLSELTASGGKVLITTMDGDKLSKLTDKKTFIIHKNLPSSENYMSVEKIADDRIVVYNPSTMSTPMTEYIIKKNDIVRVFNEYGFVLVDNVDFATIIERSKKFINGASTMEDRPSTRNFFELNRGAIKCEGLDVEDLLSYYVVYVFSKR</sequence>
<organism>
    <name type="scientific">Variola virus</name>
    <dbReference type="NCBI Taxonomy" id="10255"/>
    <lineage>
        <taxon>Viruses</taxon>
        <taxon>Varidnaviria</taxon>
        <taxon>Bamfordvirae</taxon>
        <taxon>Nucleocytoviricota</taxon>
        <taxon>Pokkesviricetes</taxon>
        <taxon>Chitovirales</taxon>
        <taxon>Poxviridae</taxon>
        <taxon>Chordopoxvirinae</taxon>
        <taxon>Orthopoxvirus</taxon>
    </lineage>
</organism>
<reference key="1">
    <citation type="journal article" date="1993" name="Nature">
        <title>Potential virulence determinants in terminal regions of variola smallpox virus genome.</title>
        <authorList>
            <person name="Massung R.F."/>
            <person name="Esposito J.J."/>
            <person name="Liu L.I."/>
            <person name="Qi J."/>
            <person name="Utterback T.R."/>
            <person name="Knight J.C."/>
            <person name="Aubin L."/>
            <person name="Yuran T.E."/>
            <person name="Parsons J.M."/>
            <person name="Loparev V.N."/>
            <person name="Selivanov N.A."/>
            <person name="Cavallaro K.F."/>
            <person name="Kerlavage A.R."/>
            <person name="Mahy B.W.J."/>
            <person name="Venter J.C."/>
        </authorList>
    </citation>
    <scope>NUCLEOTIDE SEQUENCE [GENOMIC DNA]</scope>
    <source>
        <strain>Bangladesh-1975</strain>
    </source>
</reference>
<reference key="2">
    <citation type="journal article" date="2000" name="Virology">
        <title>Alastrim smallpox variola minor virus genome DNA sequences.</title>
        <authorList>
            <person name="Shchelkunov S.N."/>
            <person name="Totmenin A.V."/>
            <person name="Loparev V.N."/>
            <person name="Safronov P.F."/>
            <person name="Gutorov V.V."/>
            <person name="Chizhikov V.E."/>
            <person name="Knight J.C."/>
            <person name="Parsons J.M."/>
            <person name="Massung R.F."/>
            <person name="Esposito J.J."/>
        </authorList>
    </citation>
    <scope>NUCLEOTIDE SEQUENCE [LARGE SCALE GENOMIC DNA]</scope>
    <source>
        <strain>Garcia-1966</strain>
    </source>
</reference>
<dbReference type="EC" id="3.6.1.74"/>
<dbReference type="EC" id="2.7.7.50"/>
<dbReference type="EC" id="2.1.1.56"/>
<dbReference type="EMBL" id="L22579">
    <property type="protein sequence ID" value="AAA60839.1"/>
    <property type="molecule type" value="Genomic_DNA"/>
</dbReference>
<dbReference type="EMBL" id="Y16780">
    <property type="protein sequence ID" value="CAB54691.1"/>
    <property type="molecule type" value="Genomic_DNA"/>
</dbReference>
<dbReference type="PIR" id="A72162">
    <property type="entry name" value="A72162"/>
</dbReference>
<dbReference type="PIR" id="T28529">
    <property type="entry name" value="T28529"/>
</dbReference>
<dbReference type="SMR" id="P0DSX6"/>
<dbReference type="Proteomes" id="UP000111493">
    <property type="component" value="Segment"/>
</dbReference>
<dbReference type="Proteomes" id="UP000119805">
    <property type="component" value="Segment"/>
</dbReference>
<dbReference type="GO" id="GO:0044423">
    <property type="term" value="C:virion component"/>
    <property type="evidence" value="ECO:0007669"/>
    <property type="project" value="UniProtKB-KW"/>
</dbReference>
<dbReference type="GO" id="GO:0050355">
    <property type="term" value="F:inorganic triphosphate phosphatase activity"/>
    <property type="evidence" value="ECO:0007669"/>
    <property type="project" value="InterPro"/>
</dbReference>
<dbReference type="GO" id="GO:0046872">
    <property type="term" value="F:metal ion binding"/>
    <property type="evidence" value="ECO:0007669"/>
    <property type="project" value="UniProtKB-KW"/>
</dbReference>
<dbReference type="GO" id="GO:0004482">
    <property type="term" value="F:mRNA 5'-cap (guanine-N7-)-methyltransferase activity"/>
    <property type="evidence" value="ECO:0007669"/>
    <property type="project" value="UniProtKB-EC"/>
</dbReference>
<dbReference type="GO" id="GO:0140818">
    <property type="term" value="F:mRNA 5'-triphosphate monophosphatase activity"/>
    <property type="evidence" value="ECO:0007669"/>
    <property type="project" value="RHEA"/>
</dbReference>
<dbReference type="GO" id="GO:0004484">
    <property type="term" value="F:mRNA guanylyltransferase activity"/>
    <property type="evidence" value="ECO:0007669"/>
    <property type="project" value="UniProtKB-EC"/>
</dbReference>
<dbReference type="GO" id="GO:0004651">
    <property type="term" value="F:polynucleotide 5'-phosphatase activity"/>
    <property type="evidence" value="ECO:0007669"/>
    <property type="project" value="UniProtKB-EC"/>
</dbReference>
<dbReference type="GO" id="GO:0003723">
    <property type="term" value="F:RNA binding"/>
    <property type="evidence" value="ECO:0007669"/>
    <property type="project" value="UniProtKB-KW"/>
</dbReference>
<dbReference type="FunFam" id="3.30.470.140:FF:000001">
    <property type="entry name" value="mRNA-capping enzyme catalytic subunit"/>
    <property type="match status" value="1"/>
</dbReference>
<dbReference type="FunFam" id="3.40.50.150:FF:000307">
    <property type="entry name" value="mRNA-capping enzyme catalytic subunit"/>
    <property type="match status" value="1"/>
</dbReference>
<dbReference type="Gene3D" id="2.40.50.830">
    <property type="match status" value="1"/>
</dbReference>
<dbReference type="Gene3D" id="3.20.100.20">
    <property type="match status" value="1"/>
</dbReference>
<dbReference type="Gene3D" id="3.30.470.140">
    <property type="match status" value="1"/>
</dbReference>
<dbReference type="Gene3D" id="3.40.50.150">
    <property type="entry name" value="Vaccinia Virus protein VP39"/>
    <property type="match status" value="1"/>
</dbReference>
<dbReference type="InterPro" id="IPR048425">
    <property type="entry name" value="MCEL_GT_NTPase"/>
</dbReference>
<dbReference type="InterPro" id="IPR048426">
    <property type="entry name" value="MCEL_GT_OB"/>
</dbReference>
<dbReference type="InterPro" id="IPR046429">
    <property type="entry name" value="MCEL_NTPase_sf"/>
</dbReference>
<dbReference type="InterPro" id="IPR046428">
    <property type="entry name" value="MCEL_OB_dom_sf"/>
</dbReference>
<dbReference type="InterPro" id="IPR019602">
    <property type="entry name" value="MCEL_TPase"/>
</dbReference>
<dbReference type="InterPro" id="IPR046430">
    <property type="entry name" value="MCEL_TPase_sf"/>
</dbReference>
<dbReference type="InterPro" id="IPR004971">
    <property type="entry name" value="mRNA_G-N7_MeTrfase_dom"/>
</dbReference>
<dbReference type="InterPro" id="IPR039753">
    <property type="entry name" value="RG7MT1"/>
</dbReference>
<dbReference type="InterPro" id="IPR029063">
    <property type="entry name" value="SAM-dependent_MTases_sf"/>
</dbReference>
<dbReference type="PANTHER" id="PTHR12189:SF2">
    <property type="entry name" value="MRNA CAP GUANINE-N7 METHYLTRANSFERASE"/>
    <property type="match status" value="1"/>
</dbReference>
<dbReference type="PANTHER" id="PTHR12189">
    <property type="entry name" value="MRNA GUANINE-7- METHYLTRANSFERASE"/>
    <property type="match status" value="1"/>
</dbReference>
<dbReference type="Pfam" id="PF21004">
    <property type="entry name" value="MCEL_GT_NTPase"/>
    <property type="match status" value="1"/>
</dbReference>
<dbReference type="Pfam" id="PF21005">
    <property type="entry name" value="MCEL_GT_OB"/>
    <property type="match status" value="1"/>
</dbReference>
<dbReference type="Pfam" id="PF10640">
    <property type="entry name" value="MCEL_TPase"/>
    <property type="match status" value="1"/>
</dbReference>
<dbReference type="Pfam" id="PF03291">
    <property type="entry name" value="mRNA_G-N7_MeTrfase"/>
    <property type="match status" value="1"/>
</dbReference>
<dbReference type="SUPFAM" id="SSF53335">
    <property type="entry name" value="S-adenosyl-L-methionine-dependent methyltransferases"/>
    <property type="match status" value="1"/>
</dbReference>
<dbReference type="PROSITE" id="PS51562">
    <property type="entry name" value="RNA_CAP0_MT"/>
    <property type="match status" value="1"/>
</dbReference>
<name>MCEL_VARV</name>
<feature type="chain" id="PRO_0000448112" description="mRNA-capping enzyme catalytic subunit">
    <location>
        <begin position="1"/>
        <end position="844"/>
    </location>
</feature>
<feature type="domain" description="mRNA cap 0 methyltransferase" evidence="3">
    <location>
        <begin position="560"/>
        <end position="844"/>
    </location>
</feature>
<feature type="region of interest" description="Triphosphatase-guanylyltransferase" evidence="1">
    <location>
        <begin position="1"/>
        <end position="539"/>
    </location>
</feature>
<feature type="active site" description="N6-GMP-lysine intermediate" evidence="1">
    <location>
        <position position="260"/>
    </location>
</feature>
<feature type="binding site" evidence="2">
    <location>
        <position position="37"/>
    </location>
    <ligand>
        <name>Mg(2+)</name>
        <dbReference type="ChEBI" id="CHEBI:18420"/>
        <note>catalytic; for RNA triphosphatase activity</note>
    </ligand>
</feature>
<feature type="binding site" evidence="2">
    <location>
        <position position="39"/>
    </location>
    <ligand>
        <name>Mg(2+)</name>
        <dbReference type="ChEBI" id="CHEBI:18420"/>
        <note>catalytic; for RNA triphosphatase activity</note>
    </ligand>
</feature>
<feature type="binding site" evidence="2">
    <location>
        <position position="192"/>
    </location>
    <ligand>
        <name>Mg(2+)</name>
        <dbReference type="ChEBI" id="CHEBI:18420"/>
        <note>catalytic; for RNA triphosphatase activity</note>
    </ligand>
</feature>
<feature type="binding site" evidence="2">
    <location>
        <position position="194"/>
    </location>
    <ligand>
        <name>Mg(2+)</name>
        <dbReference type="ChEBI" id="CHEBI:18420"/>
        <note>catalytic; for RNA triphosphatase activity</note>
    </ligand>
</feature>
<feature type="binding site" evidence="3">
    <location>
        <begin position="549"/>
        <end position="550"/>
    </location>
    <ligand>
        <name>S-adenosyl-L-methionine</name>
        <dbReference type="ChEBI" id="CHEBI:59789"/>
    </ligand>
</feature>
<feature type="binding site" evidence="3">
    <location>
        <begin position="569"/>
        <end position="570"/>
    </location>
    <ligand>
        <name>mRNA</name>
        <dbReference type="ChEBI" id="CHEBI:33699"/>
    </ligand>
    <ligandPart>
        <name>mRNA cap</name>
    </ligandPart>
</feature>
<feature type="binding site" evidence="3">
    <location>
        <position position="573"/>
    </location>
    <ligand>
        <name>S-adenosyl-L-methionine</name>
        <dbReference type="ChEBI" id="CHEBI:59789"/>
    </ligand>
</feature>
<feature type="binding site" evidence="3">
    <location>
        <position position="598"/>
    </location>
    <ligand>
        <name>S-adenosyl-L-methionine</name>
        <dbReference type="ChEBI" id="CHEBI:59789"/>
    </ligand>
</feature>
<feature type="binding site" evidence="3">
    <location>
        <position position="620"/>
    </location>
    <ligand>
        <name>S-adenosyl-L-methionine</name>
        <dbReference type="ChEBI" id="CHEBI:59789"/>
    </ligand>
</feature>
<feature type="binding site" evidence="3">
    <location>
        <begin position="678"/>
        <end position="680"/>
    </location>
    <ligand>
        <name>S-adenosyl-L-methionine</name>
        <dbReference type="ChEBI" id="CHEBI:59789"/>
    </ligand>
</feature>
<feature type="site" description="Essential for RNA triphosphatase activity" evidence="1">
    <location>
        <position position="77"/>
    </location>
</feature>
<feature type="site" description="Essential for RNA triphosphatase activity" evidence="1">
    <location>
        <position position="107"/>
    </location>
</feature>
<feature type="site" description="Essential for RNA triphosphatase activity" evidence="1">
    <location>
        <position position="126"/>
    </location>
</feature>
<feature type="site" description="Essential for RNA triphosphatase activity" evidence="1">
    <location>
        <position position="159"/>
    </location>
</feature>
<feature type="site" description="Essential for RNA triphosphatase activity" evidence="1">
    <location>
        <position position="161"/>
    </location>
</feature>
<feature type="site" description="mRNA cap binding" evidence="3">
    <location>
        <position position="607"/>
    </location>
</feature>
<feature type="site" description="mRNA cap binding" evidence="3">
    <location>
        <position position="632"/>
    </location>
</feature>
<feature type="site" description="mRNA cap binding" evidence="3">
    <location>
        <position position="682"/>
    </location>
</feature>
<feature type="site" description="mRNA cap binding" evidence="3">
    <location>
        <position position="763"/>
    </location>
</feature>
<feature type="site" description="mRNA cap binding" evidence="3">
    <location>
        <position position="836"/>
    </location>
</feature>
<feature type="sequence variant" description="In strain: Garcia-1966.">
    <original>E</original>
    <variation>D</variation>
    <location>
        <position position="552"/>
    </location>
</feature>
<feature type="sequence variant" description="In strain: Garcia-1966.">
    <original>V</original>
    <variation>A</variation>
    <location>
        <position position="741"/>
    </location>
</feature>
<feature type="sequence variant" description="In strain: Garcia-1966.">
    <original>D</original>
    <variation>N</variation>
    <location>
        <position position="831"/>
    </location>
</feature>
<proteinExistence type="inferred from homology"/>